<sequence>MAVPNELKYSKEHEWVKVEGNVAIIGITEYAQSELGDIVFVELPETDDEINEGDTFGSVESVKTVSELYAPISGKVVEVNEELEDSPEFVNESPYEKAWMVKVEISDESQIEALLTAEKYSEMIGE</sequence>
<name>GCSH_STAA8</name>
<organism>
    <name type="scientific">Staphylococcus aureus (strain NCTC 8325 / PS 47)</name>
    <dbReference type="NCBI Taxonomy" id="93061"/>
    <lineage>
        <taxon>Bacteria</taxon>
        <taxon>Bacillati</taxon>
        <taxon>Bacillota</taxon>
        <taxon>Bacilli</taxon>
        <taxon>Bacillales</taxon>
        <taxon>Staphylococcaceae</taxon>
        <taxon>Staphylococcus</taxon>
    </lineage>
</organism>
<protein>
    <recommendedName>
        <fullName evidence="1">Glycine cleavage system H protein</fullName>
    </recommendedName>
    <alternativeName>
        <fullName evidence="1">Octanoyl/lipoyl carrier protein</fullName>
    </alternativeName>
</protein>
<feature type="chain" id="PRO_0000302443" description="Glycine cleavage system H protein">
    <location>
        <begin position="1"/>
        <end position="126"/>
    </location>
</feature>
<feature type="domain" description="Lipoyl-binding" evidence="2">
    <location>
        <begin position="22"/>
        <end position="104"/>
    </location>
</feature>
<feature type="modified residue" description="N6-lipoyllysine" evidence="1">
    <location>
        <position position="63"/>
    </location>
</feature>
<evidence type="ECO:0000255" key="1">
    <source>
        <dbReference type="HAMAP-Rule" id="MF_00272"/>
    </source>
</evidence>
<evidence type="ECO:0000255" key="2">
    <source>
        <dbReference type="PROSITE-ProRule" id="PRU01066"/>
    </source>
</evidence>
<keyword id="KW-0450">Lipoyl</keyword>
<keyword id="KW-1185">Reference proteome</keyword>
<reference key="1">
    <citation type="book" date="2006" name="Gram positive pathogens, 2nd edition">
        <title>The Staphylococcus aureus NCTC 8325 genome.</title>
        <editorList>
            <person name="Fischetti V."/>
            <person name="Novick R."/>
            <person name="Ferretti J."/>
            <person name="Portnoy D."/>
            <person name="Rood J."/>
        </editorList>
        <authorList>
            <person name="Gillaspy A.F."/>
            <person name="Worrell V."/>
            <person name="Orvis J."/>
            <person name="Roe B.A."/>
            <person name="Dyer D.W."/>
            <person name="Iandolo J.J."/>
        </authorList>
    </citation>
    <scope>NUCLEOTIDE SEQUENCE [LARGE SCALE GENOMIC DNA]</scope>
    <source>
        <strain>NCTC 8325 / PS 47</strain>
    </source>
</reference>
<gene>
    <name evidence="1" type="primary">gcvH</name>
    <name type="ordered locus">SAOUHSC_00836</name>
</gene>
<dbReference type="EMBL" id="CP000253">
    <property type="protein sequence ID" value="ABD29962.1"/>
    <property type="molecule type" value="Genomic_DNA"/>
</dbReference>
<dbReference type="RefSeq" id="WP_000290485.1">
    <property type="nucleotide sequence ID" value="NZ_LS483365.1"/>
</dbReference>
<dbReference type="RefSeq" id="YP_499390.1">
    <property type="nucleotide sequence ID" value="NC_007795.1"/>
</dbReference>
<dbReference type="SMR" id="Q2FZZ8"/>
<dbReference type="STRING" id="93061.SAOUHSC_00836"/>
<dbReference type="PaxDb" id="1280-SAXN108_0876"/>
<dbReference type="GeneID" id="3918948"/>
<dbReference type="KEGG" id="sao:SAOUHSC_00836"/>
<dbReference type="PATRIC" id="fig|93061.5.peg.756"/>
<dbReference type="eggNOG" id="COG0509">
    <property type="taxonomic scope" value="Bacteria"/>
</dbReference>
<dbReference type="HOGENOM" id="CLU_097408_2_2_9"/>
<dbReference type="OrthoDB" id="9796712at2"/>
<dbReference type="PRO" id="PR:Q2FZZ8"/>
<dbReference type="Proteomes" id="UP000008816">
    <property type="component" value="Chromosome"/>
</dbReference>
<dbReference type="GO" id="GO:0005829">
    <property type="term" value="C:cytosol"/>
    <property type="evidence" value="ECO:0000318"/>
    <property type="project" value="GO_Central"/>
</dbReference>
<dbReference type="GO" id="GO:0005960">
    <property type="term" value="C:glycine cleavage complex"/>
    <property type="evidence" value="ECO:0007669"/>
    <property type="project" value="InterPro"/>
</dbReference>
<dbReference type="GO" id="GO:0019464">
    <property type="term" value="P:glycine decarboxylation via glycine cleavage system"/>
    <property type="evidence" value="ECO:0007669"/>
    <property type="project" value="UniProtKB-UniRule"/>
</dbReference>
<dbReference type="CDD" id="cd06848">
    <property type="entry name" value="GCS_H"/>
    <property type="match status" value="1"/>
</dbReference>
<dbReference type="Gene3D" id="2.40.50.100">
    <property type="match status" value="1"/>
</dbReference>
<dbReference type="HAMAP" id="MF_00272">
    <property type="entry name" value="GcvH"/>
    <property type="match status" value="1"/>
</dbReference>
<dbReference type="InterPro" id="IPR003016">
    <property type="entry name" value="2-oxoA_DH_lipoyl-BS"/>
</dbReference>
<dbReference type="InterPro" id="IPR000089">
    <property type="entry name" value="Biotin_lipoyl"/>
</dbReference>
<dbReference type="InterPro" id="IPR002930">
    <property type="entry name" value="GCV_H"/>
</dbReference>
<dbReference type="InterPro" id="IPR033753">
    <property type="entry name" value="GCV_H/Fam206"/>
</dbReference>
<dbReference type="InterPro" id="IPR017453">
    <property type="entry name" value="GCV_H_sub"/>
</dbReference>
<dbReference type="InterPro" id="IPR011053">
    <property type="entry name" value="Single_hybrid_motif"/>
</dbReference>
<dbReference type="NCBIfam" id="TIGR00527">
    <property type="entry name" value="gcvH"/>
    <property type="match status" value="1"/>
</dbReference>
<dbReference type="NCBIfam" id="NF002270">
    <property type="entry name" value="PRK01202.1"/>
    <property type="match status" value="1"/>
</dbReference>
<dbReference type="PANTHER" id="PTHR11715">
    <property type="entry name" value="GLYCINE CLEAVAGE SYSTEM H PROTEIN"/>
    <property type="match status" value="1"/>
</dbReference>
<dbReference type="PANTHER" id="PTHR11715:SF3">
    <property type="entry name" value="GLYCINE CLEAVAGE SYSTEM H PROTEIN-RELATED"/>
    <property type="match status" value="1"/>
</dbReference>
<dbReference type="Pfam" id="PF01597">
    <property type="entry name" value="GCV_H"/>
    <property type="match status" value="1"/>
</dbReference>
<dbReference type="SUPFAM" id="SSF51230">
    <property type="entry name" value="Single hybrid motif"/>
    <property type="match status" value="1"/>
</dbReference>
<dbReference type="PROSITE" id="PS50968">
    <property type="entry name" value="BIOTINYL_LIPOYL"/>
    <property type="match status" value="1"/>
</dbReference>
<dbReference type="PROSITE" id="PS00189">
    <property type="entry name" value="LIPOYL"/>
    <property type="match status" value="1"/>
</dbReference>
<comment type="function">
    <text evidence="1">The glycine cleavage system catalyzes the degradation of glycine. The H protein shuttles the methylamine group of glycine from the P protein to the T protein.</text>
</comment>
<comment type="function">
    <text evidence="1">Is also involved in protein lipoylation via its role as an octanoyl/lipoyl carrier protein intermediate.</text>
</comment>
<comment type="cofactor">
    <cofactor evidence="1">
        <name>(R)-lipoate</name>
        <dbReference type="ChEBI" id="CHEBI:83088"/>
    </cofactor>
    <text evidence="1">Binds 1 lipoyl cofactor covalently.</text>
</comment>
<comment type="subunit">
    <text evidence="1">The glycine cleavage system is composed of four proteins: P, T, L and H.</text>
</comment>
<comment type="similarity">
    <text evidence="1">Belongs to the GcvH family.</text>
</comment>
<accession>Q2FZZ8</accession>
<proteinExistence type="inferred from homology"/>